<keyword id="KW-0045">Antibiotic biosynthesis</keyword>
<keyword id="KW-0596">Phosphopantetheine</keyword>
<keyword id="KW-0597">Phosphoprotein</keyword>
<reference key="1">
    <citation type="journal article" date="1989" name="EMBO J.">
        <title>Structure and deduced function of the granaticin-producing polyketide synthase gene cluster of Streptomyces violaceoruber Tu22.</title>
        <authorList>
            <person name="Sherman D.H."/>
            <person name="Malpartida F."/>
            <person name="Bibb M.J."/>
            <person name="Kieser H.M."/>
            <person name="Bibb M.J."/>
            <person name="Hopwood D.A."/>
        </authorList>
    </citation>
    <scope>NUCLEOTIDE SEQUENCE [GENOMIC DNA]</scope>
    <source>
        <strain>Tu22</strain>
    </source>
</reference>
<reference key="2">
    <citation type="journal article" date="1998" name="Chem. Biol.">
        <title>The granaticin biosynthetic gene cluster of Streptomyces violaceoruber Tu22: sequence analysis and expression in a heterologous host.</title>
        <authorList>
            <person name="Ichinose K."/>
            <person name="Bedford D.J."/>
            <person name="Tornus D."/>
            <person name="Bechthold A."/>
            <person name="Bibb M.J."/>
            <person name="Revill W.P."/>
            <person name="Floss H.G."/>
            <person name="Hopwood D.A."/>
        </authorList>
    </citation>
    <scope>NUCLEOTIDE SEQUENCE [GENOMIC DNA]</scope>
    <source>
        <strain>Tu22</strain>
    </source>
</reference>
<reference key="3">
    <citation type="journal article" date="1995" name="Mol. Gen. Genet.">
        <title>Identification of Streptomyces violaceoruber Tu22 genes involved in the biosynthesis of granaticin.</title>
        <authorList>
            <person name="Bechthold A."/>
            <person name="Sohng J.K."/>
            <person name="Smith T.M."/>
            <person name="Chu X."/>
            <person name="Floss H.G."/>
        </authorList>
    </citation>
    <scope>NUCLEOTIDE SEQUENCE [GENOMIC DNA]</scope>
    <source>
        <strain>Tu22</strain>
    </source>
</reference>
<name>ACPX_STRVN</name>
<sequence>MARLTLDGLRTILVACAGEDDGVDLSGDILDITFEELGYDSLALMESASRIERELGVALADGDINEELTPRVLLDLVNGAQAEAA</sequence>
<comment type="function">
    <text>Acyl carrier protein.</text>
</comment>
<comment type="pathway">
    <text>Antibiotic biosynthesis; granaticin biosynthesis.</text>
</comment>
<comment type="PTM">
    <text evidence="2">4'-phosphopantetheine is transferred from CoA to a specific serine of the apo-ACP-like protein.</text>
</comment>
<organism>
    <name type="scientific">Streptomyces violaceoruber</name>
    <dbReference type="NCBI Taxonomy" id="1935"/>
    <lineage>
        <taxon>Bacteria</taxon>
        <taxon>Bacillati</taxon>
        <taxon>Actinomycetota</taxon>
        <taxon>Actinomycetes</taxon>
        <taxon>Kitasatosporales</taxon>
        <taxon>Streptomycetaceae</taxon>
        <taxon>Streptomyces</taxon>
        <taxon>Streptomyces violaceoruber group</taxon>
    </lineage>
</organism>
<evidence type="ECO:0000255" key="1">
    <source>
        <dbReference type="PROSITE-ProRule" id="PRU00258"/>
    </source>
</evidence>
<evidence type="ECO:0000305" key="2"/>
<feature type="chain" id="PRO_0000180254" description="Granaticin polyketide synthase acyl carrier protein">
    <location>
        <begin position="1"/>
        <end position="85"/>
    </location>
</feature>
<feature type="domain" description="Carrier" evidence="1">
    <location>
        <begin position="3"/>
        <end position="81"/>
    </location>
</feature>
<feature type="modified residue" description="O-(pantetheine 4'-phosphoryl)serine" evidence="1">
    <location>
        <position position="41"/>
    </location>
</feature>
<proteinExistence type="inferred from homology"/>
<gene>
    <name type="ORF">gra-orf3</name>
</gene>
<dbReference type="EMBL" id="X16300">
    <property type="protein sequence ID" value="CAA34371.1"/>
    <property type="molecule type" value="Genomic_DNA"/>
</dbReference>
<dbReference type="EMBL" id="X16144">
    <property type="protein sequence ID" value="CAA34266.1"/>
    <property type="molecule type" value="Genomic_DNA"/>
</dbReference>
<dbReference type="EMBL" id="AJ011500">
    <property type="protein sequence ID" value="CAA09655.1"/>
    <property type="molecule type" value="Genomic_DNA"/>
</dbReference>
<dbReference type="PIR" id="S05395">
    <property type="entry name" value="S05395"/>
</dbReference>
<dbReference type="SMR" id="P12885"/>
<dbReference type="UniPathway" id="UPA00175"/>
<dbReference type="GO" id="GO:0017000">
    <property type="term" value="P:antibiotic biosynthetic process"/>
    <property type="evidence" value="ECO:0007669"/>
    <property type="project" value="UniProtKB-KW"/>
</dbReference>
<dbReference type="Gene3D" id="1.10.1200.10">
    <property type="entry name" value="ACP-like"/>
    <property type="match status" value="1"/>
</dbReference>
<dbReference type="InterPro" id="IPR036736">
    <property type="entry name" value="ACP-like_sf"/>
</dbReference>
<dbReference type="InterPro" id="IPR009081">
    <property type="entry name" value="PP-bd_ACP"/>
</dbReference>
<dbReference type="InterPro" id="IPR006162">
    <property type="entry name" value="Ppantetheine_attach_site"/>
</dbReference>
<dbReference type="Pfam" id="PF00550">
    <property type="entry name" value="PP-binding"/>
    <property type="match status" value="1"/>
</dbReference>
<dbReference type="SUPFAM" id="SSF47336">
    <property type="entry name" value="ACP-like"/>
    <property type="match status" value="1"/>
</dbReference>
<dbReference type="PROSITE" id="PS50075">
    <property type="entry name" value="CARRIER"/>
    <property type="match status" value="1"/>
</dbReference>
<dbReference type="PROSITE" id="PS00012">
    <property type="entry name" value="PHOSPHOPANTETHEINE"/>
    <property type="match status" value="1"/>
</dbReference>
<accession>P12885</accession>
<protein>
    <recommendedName>
        <fullName>Granaticin polyketide synthase acyl carrier protein</fullName>
        <shortName>ACP</shortName>
    </recommendedName>
</protein>